<proteinExistence type="inferred from homology"/>
<keyword id="KW-0028">Amino-acid biosynthesis</keyword>
<keyword id="KW-0057">Aromatic amino acid biosynthesis</keyword>
<keyword id="KW-0170">Cobalt</keyword>
<keyword id="KW-0963">Cytoplasm</keyword>
<keyword id="KW-0456">Lyase</keyword>
<keyword id="KW-0479">Metal-binding</keyword>
<keyword id="KW-0520">NAD</keyword>
<keyword id="KW-0547">Nucleotide-binding</keyword>
<keyword id="KW-0862">Zinc</keyword>
<dbReference type="EC" id="4.2.3.4" evidence="1"/>
<dbReference type="EMBL" id="CU633749">
    <property type="protein sequence ID" value="CAQ70818.1"/>
    <property type="molecule type" value="Genomic_DNA"/>
</dbReference>
<dbReference type="RefSeq" id="WP_012354109.1">
    <property type="nucleotide sequence ID" value="NC_010528.1"/>
</dbReference>
<dbReference type="SMR" id="B3R7B8"/>
<dbReference type="GeneID" id="29761381"/>
<dbReference type="KEGG" id="cti:RALTA_A2893"/>
<dbReference type="eggNOG" id="COG0337">
    <property type="taxonomic scope" value="Bacteria"/>
</dbReference>
<dbReference type="HOGENOM" id="CLU_001201_0_2_4"/>
<dbReference type="BioCyc" id="CTAI977880:RALTA_RS14100-MONOMER"/>
<dbReference type="UniPathway" id="UPA00053">
    <property type="reaction ID" value="UER00085"/>
</dbReference>
<dbReference type="Proteomes" id="UP000001692">
    <property type="component" value="Chromosome 1"/>
</dbReference>
<dbReference type="GO" id="GO:0005737">
    <property type="term" value="C:cytoplasm"/>
    <property type="evidence" value="ECO:0007669"/>
    <property type="project" value="UniProtKB-SubCell"/>
</dbReference>
<dbReference type="GO" id="GO:0003856">
    <property type="term" value="F:3-dehydroquinate synthase activity"/>
    <property type="evidence" value="ECO:0007669"/>
    <property type="project" value="UniProtKB-UniRule"/>
</dbReference>
<dbReference type="GO" id="GO:0046872">
    <property type="term" value="F:metal ion binding"/>
    <property type="evidence" value="ECO:0007669"/>
    <property type="project" value="UniProtKB-KW"/>
</dbReference>
<dbReference type="GO" id="GO:0000166">
    <property type="term" value="F:nucleotide binding"/>
    <property type="evidence" value="ECO:0007669"/>
    <property type="project" value="UniProtKB-KW"/>
</dbReference>
<dbReference type="GO" id="GO:0008652">
    <property type="term" value="P:amino acid biosynthetic process"/>
    <property type="evidence" value="ECO:0007669"/>
    <property type="project" value="UniProtKB-KW"/>
</dbReference>
<dbReference type="GO" id="GO:0009073">
    <property type="term" value="P:aromatic amino acid family biosynthetic process"/>
    <property type="evidence" value="ECO:0007669"/>
    <property type="project" value="UniProtKB-KW"/>
</dbReference>
<dbReference type="GO" id="GO:0009423">
    <property type="term" value="P:chorismate biosynthetic process"/>
    <property type="evidence" value="ECO:0007669"/>
    <property type="project" value="UniProtKB-UniRule"/>
</dbReference>
<dbReference type="CDD" id="cd08195">
    <property type="entry name" value="DHQS"/>
    <property type="match status" value="1"/>
</dbReference>
<dbReference type="FunFam" id="3.40.50.1970:FF:000001">
    <property type="entry name" value="3-dehydroquinate synthase"/>
    <property type="match status" value="1"/>
</dbReference>
<dbReference type="Gene3D" id="3.40.50.1970">
    <property type="match status" value="1"/>
</dbReference>
<dbReference type="Gene3D" id="1.20.1090.10">
    <property type="entry name" value="Dehydroquinate synthase-like - alpha domain"/>
    <property type="match status" value="1"/>
</dbReference>
<dbReference type="HAMAP" id="MF_00110">
    <property type="entry name" value="DHQ_synthase"/>
    <property type="match status" value="1"/>
</dbReference>
<dbReference type="InterPro" id="IPR050071">
    <property type="entry name" value="Dehydroquinate_synthase"/>
</dbReference>
<dbReference type="InterPro" id="IPR016037">
    <property type="entry name" value="DHQ_synth_AroB"/>
</dbReference>
<dbReference type="InterPro" id="IPR030963">
    <property type="entry name" value="DHQ_synth_fam"/>
</dbReference>
<dbReference type="InterPro" id="IPR030960">
    <property type="entry name" value="DHQS/DOIS_N"/>
</dbReference>
<dbReference type="InterPro" id="IPR056179">
    <property type="entry name" value="DHQS_C"/>
</dbReference>
<dbReference type="NCBIfam" id="TIGR01357">
    <property type="entry name" value="aroB"/>
    <property type="match status" value="1"/>
</dbReference>
<dbReference type="PANTHER" id="PTHR43622">
    <property type="entry name" value="3-DEHYDROQUINATE SYNTHASE"/>
    <property type="match status" value="1"/>
</dbReference>
<dbReference type="PANTHER" id="PTHR43622:SF7">
    <property type="entry name" value="3-DEHYDROQUINATE SYNTHASE, CHLOROPLASTIC"/>
    <property type="match status" value="1"/>
</dbReference>
<dbReference type="Pfam" id="PF01761">
    <property type="entry name" value="DHQ_synthase"/>
    <property type="match status" value="1"/>
</dbReference>
<dbReference type="Pfam" id="PF24621">
    <property type="entry name" value="DHQS_C"/>
    <property type="match status" value="1"/>
</dbReference>
<dbReference type="PIRSF" id="PIRSF001455">
    <property type="entry name" value="DHQ_synth"/>
    <property type="match status" value="1"/>
</dbReference>
<dbReference type="SUPFAM" id="SSF56796">
    <property type="entry name" value="Dehydroquinate synthase-like"/>
    <property type="match status" value="1"/>
</dbReference>
<sequence>MITLEVDLGERSYPIHIGSGLLDNAELLRPHVRGQHAVIVTNETVGPLYAARVEQALAALGKTVRTVTLPDGEAFKHWETLNRIFDALLQAGADRKTTLVALGGGVVGDMTGFAAACYMRGVPFIQMPTTLLAQVDSSVGGKTGINHPLGKNMIGAFHQPNAVIADIDTLRTLPPRELAAGMAEVIKHGAIADADYFAWIERNIQALNACDPELMAVAVQRSCEIKAGVVAQDEREGGLRAILNFGHTFGHAIEAGMGYGAWLHGEAVGCGMVMAADLSHRLGFIDIETLARVRTLTQAAMLPVVAPELGADRYIELMKVDKKAEAGSIKFILLKKLGEAFITSVPDADLRATLAHAVLKPPTEAPVA</sequence>
<comment type="function">
    <text evidence="1">Catalyzes the conversion of 3-deoxy-D-arabino-heptulosonate 7-phosphate (DAHP) to dehydroquinate (DHQ).</text>
</comment>
<comment type="catalytic activity">
    <reaction evidence="1">
        <text>7-phospho-2-dehydro-3-deoxy-D-arabino-heptonate = 3-dehydroquinate + phosphate</text>
        <dbReference type="Rhea" id="RHEA:21968"/>
        <dbReference type="ChEBI" id="CHEBI:32364"/>
        <dbReference type="ChEBI" id="CHEBI:43474"/>
        <dbReference type="ChEBI" id="CHEBI:58394"/>
        <dbReference type="EC" id="4.2.3.4"/>
    </reaction>
</comment>
<comment type="cofactor">
    <cofactor evidence="1">
        <name>Co(2+)</name>
        <dbReference type="ChEBI" id="CHEBI:48828"/>
    </cofactor>
    <cofactor evidence="1">
        <name>Zn(2+)</name>
        <dbReference type="ChEBI" id="CHEBI:29105"/>
    </cofactor>
    <text evidence="1">Binds 1 divalent metal cation per subunit. Can use either Co(2+) or Zn(2+).</text>
</comment>
<comment type="cofactor">
    <cofactor evidence="1">
        <name>NAD(+)</name>
        <dbReference type="ChEBI" id="CHEBI:57540"/>
    </cofactor>
</comment>
<comment type="pathway">
    <text evidence="1">Metabolic intermediate biosynthesis; chorismate biosynthesis; chorismate from D-erythrose 4-phosphate and phosphoenolpyruvate: step 2/7.</text>
</comment>
<comment type="subcellular location">
    <subcellularLocation>
        <location evidence="1">Cytoplasm</location>
    </subcellularLocation>
</comment>
<comment type="similarity">
    <text evidence="1">Belongs to the sugar phosphate cyclases superfamily. Dehydroquinate synthase family.</text>
</comment>
<protein>
    <recommendedName>
        <fullName evidence="1">3-dehydroquinate synthase</fullName>
        <shortName evidence="1">DHQS</shortName>
        <ecNumber evidence="1">4.2.3.4</ecNumber>
    </recommendedName>
</protein>
<gene>
    <name evidence="1" type="primary">aroB</name>
    <name type="ordered locus">RALTA_A2893</name>
</gene>
<feature type="chain" id="PRO_1000094500" description="3-dehydroquinate synthase">
    <location>
        <begin position="1"/>
        <end position="368"/>
    </location>
</feature>
<feature type="binding site" evidence="1">
    <location>
        <begin position="71"/>
        <end position="76"/>
    </location>
    <ligand>
        <name>NAD(+)</name>
        <dbReference type="ChEBI" id="CHEBI:57540"/>
    </ligand>
</feature>
<feature type="binding site" evidence="1">
    <location>
        <begin position="105"/>
        <end position="109"/>
    </location>
    <ligand>
        <name>NAD(+)</name>
        <dbReference type="ChEBI" id="CHEBI:57540"/>
    </ligand>
</feature>
<feature type="binding site" evidence="1">
    <location>
        <begin position="129"/>
        <end position="130"/>
    </location>
    <ligand>
        <name>NAD(+)</name>
        <dbReference type="ChEBI" id="CHEBI:57540"/>
    </ligand>
</feature>
<feature type="binding site" evidence="1">
    <location>
        <position position="142"/>
    </location>
    <ligand>
        <name>NAD(+)</name>
        <dbReference type="ChEBI" id="CHEBI:57540"/>
    </ligand>
</feature>
<feature type="binding site" evidence="1">
    <location>
        <position position="151"/>
    </location>
    <ligand>
        <name>NAD(+)</name>
        <dbReference type="ChEBI" id="CHEBI:57540"/>
    </ligand>
</feature>
<feature type="binding site" evidence="1">
    <location>
        <begin position="169"/>
        <end position="172"/>
    </location>
    <ligand>
        <name>NAD(+)</name>
        <dbReference type="ChEBI" id="CHEBI:57540"/>
    </ligand>
</feature>
<feature type="binding site" evidence="1">
    <location>
        <position position="184"/>
    </location>
    <ligand>
        <name>Zn(2+)</name>
        <dbReference type="ChEBI" id="CHEBI:29105"/>
    </ligand>
</feature>
<feature type="binding site" evidence="1">
    <location>
        <position position="247"/>
    </location>
    <ligand>
        <name>Zn(2+)</name>
        <dbReference type="ChEBI" id="CHEBI:29105"/>
    </ligand>
</feature>
<feature type="binding site" evidence="1">
    <location>
        <position position="264"/>
    </location>
    <ligand>
        <name>Zn(2+)</name>
        <dbReference type="ChEBI" id="CHEBI:29105"/>
    </ligand>
</feature>
<accession>B3R7B8</accession>
<reference key="1">
    <citation type="journal article" date="2008" name="Genome Res.">
        <title>Genome sequence of the beta-rhizobium Cupriavidus taiwanensis and comparative genomics of rhizobia.</title>
        <authorList>
            <person name="Amadou C."/>
            <person name="Pascal G."/>
            <person name="Mangenot S."/>
            <person name="Glew M."/>
            <person name="Bontemps C."/>
            <person name="Capela D."/>
            <person name="Carrere S."/>
            <person name="Cruveiller S."/>
            <person name="Dossat C."/>
            <person name="Lajus A."/>
            <person name="Marchetti M."/>
            <person name="Poinsot V."/>
            <person name="Rouy Z."/>
            <person name="Servin B."/>
            <person name="Saad M."/>
            <person name="Schenowitz C."/>
            <person name="Barbe V."/>
            <person name="Batut J."/>
            <person name="Medigue C."/>
            <person name="Masson-Boivin C."/>
        </authorList>
    </citation>
    <scope>NUCLEOTIDE SEQUENCE [LARGE SCALE GENOMIC DNA]</scope>
    <source>
        <strain>DSM 17343 / BCRC 17206 / CCUG 44338 / CIP 107171 / LMG 19424 / R1</strain>
    </source>
</reference>
<name>AROB_CUPTR</name>
<organism>
    <name type="scientific">Cupriavidus taiwanensis (strain DSM 17343 / BCRC 17206 / CCUG 44338 / CIP 107171 / LMG 19424 / R1)</name>
    <name type="common">Ralstonia taiwanensis (strain LMG 19424)</name>
    <dbReference type="NCBI Taxonomy" id="977880"/>
    <lineage>
        <taxon>Bacteria</taxon>
        <taxon>Pseudomonadati</taxon>
        <taxon>Pseudomonadota</taxon>
        <taxon>Betaproteobacteria</taxon>
        <taxon>Burkholderiales</taxon>
        <taxon>Burkholderiaceae</taxon>
        <taxon>Cupriavidus</taxon>
    </lineage>
</organism>
<evidence type="ECO:0000255" key="1">
    <source>
        <dbReference type="HAMAP-Rule" id="MF_00110"/>
    </source>
</evidence>